<reference key="1">
    <citation type="journal article" date="2008" name="BMC Genomics">
        <title>Comparative genomic analysis of the gut bacterium Bifidobacterium longum reveals loci susceptible to deletion during pure culture growth.</title>
        <authorList>
            <person name="Lee J.H."/>
            <person name="Karamychev V.N."/>
            <person name="Kozyavkin S.A."/>
            <person name="Mills D."/>
            <person name="Pavlov A.R."/>
            <person name="Pavlova N.V."/>
            <person name="Polouchine N.N."/>
            <person name="Richardson P.M."/>
            <person name="Shakhova V.V."/>
            <person name="Slesarev A.I."/>
            <person name="Weimer B."/>
            <person name="O'Sullivan D.J."/>
        </authorList>
    </citation>
    <scope>NUCLEOTIDE SEQUENCE [LARGE SCALE GENOMIC DNA]</scope>
    <source>
        <strain>DJO10A</strain>
    </source>
</reference>
<gene>
    <name evidence="1" type="primary">hisA</name>
    <name type="ordered locus">BLD_0157</name>
</gene>
<protein>
    <recommendedName>
        <fullName evidence="1">1-(5-phosphoribosyl)-5-[(5-phosphoribosylamino)methylideneamino] imidazole-4-carboxamide isomerase</fullName>
        <ecNumber evidence="1">5.3.1.16</ecNumber>
    </recommendedName>
    <alternativeName>
        <fullName evidence="1">Phosphoribosylformimino-5-aminoimidazole carboxamide ribotide isomerase</fullName>
    </alternativeName>
</protein>
<accession>B3DQA4</accession>
<sequence>MSLTLLPAVDVRDGKAVRLRQGESGSETDYGSPFEAARTWVEAGAEWIHLVDLDAAFGTGNNRDQLREIVHELGDRVNIELSGGVRDDASLDAALEAGAARVNIGTAALENPDWTASVIKKYGDRVAVGLDVRGHTLAARGWTREGGDLFETMKFLDSVGCLRYVVTDVAKDGMMSGPNIQLLSEVAERTDAKVTASGGISKLDDLRAIKELAEIGVDSAILGKSLYARAFTLQEALEVAK</sequence>
<dbReference type="EC" id="5.3.1.16" evidence="1"/>
<dbReference type="EMBL" id="CP000605">
    <property type="protein sequence ID" value="ACD97603.1"/>
    <property type="molecule type" value="Genomic_DNA"/>
</dbReference>
<dbReference type="RefSeq" id="WP_010080925.1">
    <property type="nucleotide sequence ID" value="NC_010816.1"/>
</dbReference>
<dbReference type="SMR" id="B3DQA4"/>
<dbReference type="KEGG" id="blj:BLD_0157"/>
<dbReference type="HOGENOM" id="CLU_048577_1_1_11"/>
<dbReference type="UniPathway" id="UPA00031">
    <property type="reaction ID" value="UER00009"/>
</dbReference>
<dbReference type="Proteomes" id="UP000002419">
    <property type="component" value="Chromosome"/>
</dbReference>
<dbReference type="GO" id="GO:0005737">
    <property type="term" value="C:cytoplasm"/>
    <property type="evidence" value="ECO:0007669"/>
    <property type="project" value="UniProtKB-SubCell"/>
</dbReference>
<dbReference type="GO" id="GO:0003949">
    <property type="term" value="F:1-(5-phosphoribosyl)-5-[(5-phosphoribosylamino)methylideneamino]imidazole-4-carboxamide isomerase activity"/>
    <property type="evidence" value="ECO:0007669"/>
    <property type="project" value="UniProtKB-UniRule"/>
</dbReference>
<dbReference type="GO" id="GO:0004640">
    <property type="term" value="F:phosphoribosylanthranilate isomerase activity"/>
    <property type="evidence" value="ECO:0007669"/>
    <property type="project" value="InterPro"/>
</dbReference>
<dbReference type="GO" id="GO:0000105">
    <property type="term" value="P:L-histidine biosynthetic process"/>
    <property type="evidence" value="ECO:0007669"/>
    <property type="project" value="UniProtKB-UniRule"/>
</dbReference>
<dbReference type="GO" id="GO:0000162">
    <property type="term" value="P:L-tryptophan biosynthetic process"/>
    <property type="evidence" value="ECO:0007669"/>
    <property type="project" value="InterPro"/>
</dbReference>
<dbReference type="CDD" id="cd04732">
    <property type="entry name" value="HisA"/>
    <property type="match status" value="1"/>
</dbReference>
<dbReference type="FunFam" id="3.20.20.70:FF:000009">
    <property type="entry name" value="1-(5-phosphoribosyl)-5-[(5-phosphoribosylamino)methylideneamino] imidazole-4-carboxamide isomerase"/>
    <property type="match status" value="1"/>
</dbReference>
<dbReference type="Gene3D" id="3.20.20.70">
    <property type="entry name" value="Aldolase class I"/>
    <property type="match status" value="1"/>
</dbReference>
<dbReference type="HAMAP" id="MF_01014">
    <property type="entry name" value="HisA"/>
    <property type="match status" value="1"/>
</dbReference>
<dbReference type="InterPro" id="IPR013785">
    <property type="entry name" value="Aldolase_TIM"/>
</dbReference>
<dbReference type="InterPro" id="IPR006062">
    <property type="entry name" value="His_biosynth"/>
</dbReference>
<dbReference type="InterPro" id="IPR010188">
    <property type="entry name" value="HisA/PriA_Actinobacteria"/>
</dbReference>
<dbReference type="InterPro" id="IPR044524">
    <property type="entry name" value="Isoase_HisA-like"/>
</dbReference>
<dbReference type="InterPro" id="IPR023016">
    <property type="entry name" value="Isoase_HisA-like_bact"/>
</dbReference>
<dbReference type="InterPro" id="IPR011060">
    <property type="entry name" value="RibuloseP-bd_barrel"/>
</dbReference>
<dbReference type="NCBIfam" id="TIGR01919">
    <property type="entry name" value="hisA-trpF"/>
    <property type="match status" value="1"/>
</dbReference>
<dbReference type="PANTHER" id="PTHR43090">
    <property type="entry name" value="1-(5-PHOSPHORIBOSYL)-5-[(5-PHOSPHORIBOSYLAMINO)METHYLIDENEAMINO] IMIDAZOLE-4-CARBOXAMIDE ISOMERASE"/>
    <property type="match status" value="1"/>
</dbReference>
<dbReference type="PANTHER" id="PTHR43090:SF2">
    <property type="entry name" value="1-(5-PHOSPHORIBOSYL)-5-[(5-PHOSPHORIBOSYLAMINO)METHYLIDENEAMINO] IMIDAZOLE-4-CARBOXAMIDE ISOMERASE"/>
    <property type="match status" value="1"/>
</dbReference>
<dbReference type="Pfam" id="PF00977">
    <property type="entry name" value="His_biosynth"/>
    <property type="match status" value="1"/>
</dbReference>
<dbReference type="SUPFAM" id="SSF51366">
    <property type="entry name" value="Ribulose-phoshate binding barrel"/>
    <property type="match status" value="1"/>
</dbReference>
<evidence type="ECO:0000255" key="1">
    <source>
        <dbReference type="HAMAP-Rule" id="MF_01014"/>
    </source>
</evidence>
<comment type="catalytic activity">
    <reaction evidence="1">
        <text>1-(5-phospho-beta-D-ribosyl)-5-[(5-phospho-beta-D-ribosylamino)methylideneamino]imidazole-4-carboxamide = 5-[(5-phospho-1-deoxy-D-ribulos-1-ylimino)methylamino]-1-(5-phospho-beta-D-ribosyl)imidazole-4-carboxamide</text>
        <dbReference type="Rhea" id="RHEA:15469"/>
        <dbReference type="ChEBI" id="CHEBI:58435"/>
        <dbReference type="ChEBI" id="CHEBI:58525"/>
        <dbReference type="EC" id="5.3.1.16"/>
    </reaction>
</comment>
<comment type="pathway">
    <text evidence="1">Amino-acid biosynthesis; L-histidine biosynthesis; L-histidine from 5-phospho-alpha-D-ribose 1-diphosphate: step 4/9.</text>
</comment>
<comment type="subcellular location">
    <subcellularLocation>
        <location evidence="1">Cytoplasm</location>
    </subcellularLocation>
</comment>
<comment type="similarity">
    <text evidence="1">Belongs to the HisA/HisF family.</text>
</comment>
<feature type="chain" id="PRO_1000135084" description="1-(5-phosphoribosyl)-5-[(5-phosphoribosylamino)methylideneamino] imidazole-4-carboxamide isomerase">
    <location>
        <begin position="1"/>
        <end position="241"/>
    </location>
</feature>
<feature type="active site" description="Proton acceptor" evidence="1">
    <location>
        <position position="10"/>
    </location>
</feature>
<feature type="active site" description="Proton donor" evidence="1">
    <location>
        <position position="131"/>
    </location>
</feature>
<organism>
    <name type="scientific">Bifidobacterium longum (strain DJO10A)</name>
    <dbReference type="NCBI Taxonomy" id="205913"/>
    <lineage>
        <taxon>Bacteria</taxon>
        <taxon>Bacillati</taxon>
        <taxon>Actinomycetota</taxon>
        <taxon>Actinomycetes</taxon>
        <taxon>Bifidobacteriales</taxon>
        <taxon>Bifidobacteriaceae</taxon>
        <taxon>Bifidobacterium</taxon>
    </lineage>
</organism>
<name>HIS4_BIFLD</name>
<keyword id="KW-0028">Amino-acid biosynthesis</keyword>
<keyword id="KW-0963">Cytoplasm</keyword>
<keyword id="KW-0368">Histidine biosynthesis</keyword>
<keyword id="KW-0413">Isomerase</keyword>
<proteinExistence type="inferred from homology"/>